<accession>Q9W705</accession>
<comment type="function">
    <text evidence="1 2 6">Transcriptional coactivator for steroid receptors and nuclear receptors. Coactivator of the steroid binding domain (AF-2) but not of the modulating N-terminal domain (AF-1) (By similarity). Required in a nuclear receptor pathway to suppress expression of dorsal mesoderm genes. May play a role in the positive regulation of the circadian clock (By similarity).</text>
</comment>
<comment type="subcellular location">
    <subcellularLocation>
        <location evidence="1">Nucleus</location>
    </subcellularLocation>
</comment>
<comment type="tissue specificity">
    <text evidence="6">Expressed homogeneously during late blastula-early gastrula stages, becoming highly expressed in the notochord in the late gastrula and neurula stages. At hatching, restricted to a few areas including the blood precursor region, prospective pronephros and retina.</text>
</comment>
<comment type="domain">
    <text evidence="1">Contains three Leu-Xaa-Xaa-Leu-Leu (LXXLL) motifs. The LXXLL motifs are essential for the association with nuclear receptors and, at least in part, functionally redundant (By similarity).</text>
</comment>
<comment type="domain">
    <text evidence="1">The LLXXLXXXL motif is involved in transcriptional coactivation and CREBBP/CBP binding.</text>
</comment>
<comment type="domain">
    <text evidence="1">Contains 2 C-terminal transcription activation domains (AD1 and AD2) that can function independently.</text>
</comment>
<comment type="similarity">
    <text evidence="7">Belongs to the SRC/p160 nuclear receptor coactivator family.</text>
</comment>
<sequence length="1516" mass="166156">MGENLSDPSRAEPRKRKESLDQLGPSPKRSTEKRNREQENKYIEELAELIFANFNDIDNLNFKPDKCAILKETVKQIRQIKEHEKTAAANEDEVQKADVSSTGQSVIDKDALGPMMLEALDGFFFVVNREGNVVFVSENVTQYLRYNQEELMNTSVYSILHVGDHSEFIKNLLPKSLVNGVPRRNSHTFNCRMLVKPMMECEEERHDGQETHQKYESMQCFAVSQPKSIKEEGEDFQSCLICVARRVPVKERPVPPPSESFTTRQDFQGKITSLDTTSMRALMRPGWEDMVRRCIQRFHSQHDGEISYSRRHHQEVLRQGHATSPFYRFSLSDGTTVVAQTKSRLMRSQTNNEPPLVLSLHVLQREQNVCGLNQDLAGQAMGKTLNPVQSSSPAHQAMYGGNPGQDTTISSNMNYAISGPKEQMGLATGRFVGSGGMNHISSLQATTPQGNNYALKMNSPSHGSPGMGQGQPNSMLSPRHRVSPGVAGSPRIAPSPFSPAGSLHSPVSVCSSTGNSHSYTNSSLNALQALSEGQGPLAPPLSSPDLKGGNLQHSPGNMNPPQLRKMGSIDSKESFGLYEEQPESATGQGESGCHSNEQKDCGENLSSVVDKTEGQSRLLDGKGQQKLLKLLTTKSDQMEPSTLPSNTLGDMNKDSLSNFASNSMSASAHGTSLKEKHKILHRLLQDSSSPVDLAKLTAEATGKELSQESNSTGPGSEVTIKQEPVSPKKKEHALLRYLLDKDDTTDNVADITPKLERADNKVDPSSCPKLSAVKAEKEEPNFGHTDQPGSDFDNLDEILDDLQNSQLSQLFSDTRHDGNSADKQAIMNDLMQLAGENSTGLPAWAQKQRMLRMQQNNGFNSQLAAQLGRLPNQNLPLDIHFQSQASAGSFAQMRSSGPYTTVPQSGVINNQAMMGSQGNVRNSSPGIVGVNGPRPPLKPGDWGSQASAVRPACPTTSTAMNRHDMSRSPTASIPMRPGSQVCPRQVLQSAVMNMGSSELDMNISGPQYTQQQAPPNQTAPWPNRILTIEQPSFNNQNRQPFGSPADDLICQPIVSESPADDGNLLDQLYMALRNFDGLEEIDRALGIPEMVSQGQAVEQESFGSPESNLMMEQKPPVYNHAYANQGQMAQNSYQPMQDPGFNPMGQRPSYGILRMQNRPGLRPTGMVQNQPNQLRLQLQHRLQAQNRQQLMNPINNVSNMNLAMRPGVPGQLREQGPINAQMLAQRQREILSQHLRQKQLQQQQQQQQQQQQQQQQQQQQQQQQQQQQQQQQQHRAMMMRSQGLAMPPNMVGSGGIPASINSPRIPQGSTQQFPFPPNYGTGIPSPPPFTSPFSPVPPSPGSQSLSHSSLHGSQMNLANQGIMGSMGGQYGPVMNPQMQHNAFQFANSGMSQQSDPGFTGATTPQSPIMSPRMGHIQSSMMQQSQANPAYQSELNGWAQGNPAGNSMFSQQSPPHFGQQSGTSMYNSNNMNISVSMAANGNGMNNMNQMTGQINMTSVTSVPTSGLSSMGPEQKYC</sequence>
<evidence type="ECO:0000250" key="1">
    <source>
        <dbReference type="UniProtKB" id="Q15596"/>
    </source>
</evidence>
<evidence type="ECO:0000250" key="2">
    <source>
        <dbReference type="UniProtKB" id="Q61026"/>
    </source>
</evidence>
<evidence type="ECO:0000255" key="3">
    <source>
        <dbReference type="PROSITE-ProRule" id="PRU00140"/>
    </source>
</evidence>
<evidence type="ECO:0000255" key="4">
    <source>
        <dbReference type="PROSITE-ProRule" id="PRU00981"/>
    </source>
</evidence>
<evidence type="ECO:0000256" key="5">
    <source>
        <dbReference type="SAM" id="MobiDB-lite"/>
    </source>
</evidence>
<evidence type="ECO:0000269" key="6">
    <source>
    </source>
</evidence>
<evidence type="ECO:0000305" key="7"/>
<organism>
    <name type="scientific">Xenopus laevis</name>
    <name type="common">African clawed frog</name>
    <dbReference type="NCBI Taxonomy" id="8355"/>
    <lineage>
        <taxon>Eukaryota</taxon>
        <taxon>Metazoa</taxon>
        <taxon>Chordata</taxon>
        <taxon>Craniata</taxon>
        <taxon>Vertebrata</taxon>
        <taxon>Euteleostomi</taxon>
        <taxon>Amphibia</taxon>
        <taxon>Batrachia</taxon>
        <taxon>Anura</taxon>
        <taxon>Pipoidea</taxon>
        <taxon>Pipidae</taxon>
        <taxon>Xenopodinae</taxon>
        <taxon>Xenopus</taxon>
        <taxon>Xenopus</taxon>
    </lineage>
</organism>
<name>NCOA2_XENLA</name>
<proteinExistence type="evidence at transcript level"/>
<dbReference type="EMBL" id="AJ243119">
    <property type="protein sequence ID" value="CAB45389.1"/>
    <property type="molecule type" value="mRNA"/>
</dbReference>
<dbReference type="RefSeq" id="NP_001081139.1">
    <property type="nucleotide sequence ID" value="NM_001087670.1"/>
</dbReference>
<dbReference type="SMR" id="Q9W705"/>
<dbReference type="BioGRID" id="99007">
    <property type="interactions" value="1"/>
</dbReference>
<dbReference type="IntAct" id="Q9W705">
    <property type="interactions" value="1"/>
</dbReference>
<dbReference type="GeneID" id="394405"/>
<dbReference type="KEGG" id="xla:394405"/>
<dbReference type="AGR" id="Xenbase:XB-GENE-864856"/>
<dbReference type="CTD" id="394405"/>
<dbReference type="Xenbase" id="XB-GENE-864856">
    <property type="gene designation" value="ncoa2.S"/>
</dbReference>
<dbReference type="OrthoDB" id="10035882at2759"/>
<dbReference type="Proteomes" id="UP000186698">
    <property type="component" value="Chromosome 6S"/>
</dbReference>
<dbReference type="Bgee" id="394405">
    <property type="expression patterns" value="Expressed in spleen and 19 other cell types or tissues"/>
</dbReference>
<dbReference type="GO" id="GO:0005634">
    <property type="term" value="C:nucleus"/>
    <property type="evidence" value="ECO:0000250"/>
    <property type="project" value="UniProtKB"/>
</dbReference>
<dbReference type="GO" id="GO:0016922">
    <property type="term" value="F:nuclear receptor binding"/>
    <property type="evidence" value="ECO:0000318"/>
    <property type="project" value="GO_Central"/>
</dbReference>
<dbReference type="GO" id="GO:0046966">
    <property type="term" value="F:nuclear thyroid hormone receptor binding"/>
    <property type="evidence" value="ECO:0000250"/>
    <property type="project" value="UniProtKB"/>
</dbReference>
<dbReference type="GO" id="GO:0046983">
    <property type="term" value="F:protein dimerization activity"/>
    <property type="evidence" value="ECO:0007669"/>
    <property type="project" value="InterPro"/>
</dbReference>
<dbReference type="GO" id="GO:0003713">
    <property type="term" value="F:transcription coactivator activity"/>
    <property type="evidence" value="ECO:0000250"/>
    <property type="project" value="UniProtKB"/>
</dbReference>
<dbReference type="GO" id="GO:0032870">
    <property type="term" value="P:cellular response to hormone stimulus"/>
    <property type="evidence" value="ECO:0000318"/>
    <property type="project" value="GO_Central"/>
</dbReference>
<dbReference type="GO" id="GO:0009792">
    <property type="term" value="P:embryo development ending in birth or egg hatching"/>
    <property type="evidence" value="ECO:0000315"/>
    <property type="project" value="UniProtKB"/>
</dbReference>
<dbReference type="GO" id="GO:0035556">
    <property type="term" value="P:intracellular signal transduction"/>
    <property type="evidence" value="ECO:0000315"/>
    <property type="project" value="UniProtKB"/>
</dbReference>
<dbReference type="GO" id="GO:0045944">
    <property type="term" value="P:positive regulation of transcription by RNA polymerase II"/>
    <property type="evidence" value="ECO:0000318"/>
    <property type="project" value="GO_Central"/>
</dbReference>
<dbReference type="GO" id="GO:0006355">
    <property type="term" value="P:regulation of DNA-templated transcription"/>
    <property type="evidence" value="ECO:0000315"/>
    <property type="project" value="UniProtKB"/>
</dbReference>
<dbReference type="GO" id="GO:0019216">
    <property type="term" value="P:regulation of lipid metabolic process"/>
    <property type="evidence" value="ECO:0000250"/>
    <property type="project" value="UniProtKB"/>
</dbReference>
<dbReference type="GO" id="GO:0048511">
    <property type="term" value="P:rhythmic process"/>
    <property type="evidence" value="ECO:0007669"/>
    <property type="project" value="UniProtKB-KW"/>
</dbReference>
<dbReference type="CDD" id="cd18950">
    <property type="entry name" value="bHLH-PAS_NCoA2_SRC2"/>
    <property type="match status" value="1"/>
</dbReference>
<dbReference type="CDD" id="cd00130">
    <property type="entry name" value="PAS"/>
    <property type="match status" value="1"/>
</dbReference>
<dbReference type="FunFam" id="3.30.450.20:FF:000007">
    <property type="entry name" value="Nuclear receptor coactivator"/>
    <property type="match status" value="1"/>
</dbReference>
<dbReference type="FunFam" id="3.30.450.20:FF:000008">
    <property type="entry name" value="Nuclear receptor coactivator"/>
    <property type="match status" value="1"/>
</dbReference>
<dbReference type="FunFam" id="4.10.280.10:FF:000008">
    <property type="entry name" value="Nuclear receptor coactivator"/>
    <property type="match status" value="1"/>
</dbReference>
<dbReference type="Gene3D" id="4.10.280.10">
    <property type="entry name" value="Helix-loop-helix DNA-binding domain"/>
    <property type="match status" value="1"/>
</dbReference>
<dbReference type="Gene3D" id="6.10.140.20">
    <property type="entry name" value="Nuclear receptor coactivator, Ncoa-type, interlocking domain"/>
    <property type="match status" value="1"/>
</dbReference>
<dbReference type="Gene3D" id="3.30.450.20">
    <property type="entry name" value="PAS domain"/>
    <property type="match status" value="2"/>
</dbReference>
<dbReference type="InterPro" id="IPR011598">
    <property type="entry name" value="bHLH_dom"/>
</dbReference>
<dbReference type="InterPro" id="IPR056193">
    <property type="entry name" value="bHLH_NCOA1-3"/>
</dbReference>
<dbReference type="InterPro" id="IPR036638">
    <property type="entry name" value="HLH_DNA-bd_sf"/>
</dbReference>
<dbReference type="InterPro" id="IPR010011">
    <property type="entry name" value="NCO_DUF1518"/>
</dbReference>
<dbReference type="InterPro" id="IPR032565">
    <property type="entry name" value="NCOA2/3_DUF4927"/>
</dbReference>
<dbReference type="InterPro" id="IPR028822">
    <property type="entry name" value="NCOA2_bHLH"/>
</dbReference>
<dbReference type="InterPro" id="IPR009110">
    <property type="entry name" value="Nuc_rcpt_coact"/>
</dbReference>
<dbReference type="InterPro" id="IPR014920">
    <property type="entry name" value="Nuc_rcpt_coact_Ncoa-typ"/>
</dbReference>
<dbReference type="InterPro" id="IPR037077">
    <property type="entry name" value="Nuc_rcpt_coact_Ncoa_int_sf"/>
</dbReference>
<dbReference type="InterPro" id="IPR017426">
    <property type="entry name" value="Nuclear_rcpt_coactivator"/>
</dbReference>
<dbReference type="InterPro" id="IPR000014">
    <property type="entry name" value="PAS"/>
</dbReference>
<dbReference type="InterPro" id="IPR035965">
    <property type="entry name" value="PAS-like_dom_sf"/>
</dbReference>
<dbReference type="InterPro" id="IPR013767">
    <property type="entry name" value="PAS_fold"/>
</dbReference>
<dbReference type="InterPro" id="IPR014935">
    <property type="entry name" value="SRC/p160_LXXLL"/>
</dbReference>
<dbReference type="PANTHER" id="PTHR10684">
    <property type="entry name" value="NUCLEAR RECEPTOR COACTIVATOR"/>
    <property type="match status" value="1"/>
</dbReference>
<dbReference type="PANTHER" id="PTHR10684:SF2">
    <property type="entry name" value="NUCLEAR RECEPTOR COACTIVATOR 2"/>
    <property type="match status" value="1"/>
</dbReference>
<dbReference type="Pfam" id="PF23172">
    <property type="entry name" value="bHLH_NCOA"/>
    <property type="match status" value="1"/>
</dbReference>
<dbReference type="Pfam" id="PF07469">
    <property type="entry name" value="DUF1518"/>
    <property type="match status" value="2"/>
</dbReference>
<dbReference type="Pfam" id="PF16279">
    <property type="entry name" value="DUF4927"/>
    <property type="match status" value="1"/>
</dbReference>
<dbReference type="Pfam" id="PF16665">
    <property type="entry name" value="NCOA_u2"/>
    <property type="match status" value="1"/>
</dbReference>
<dbReference type="Pfam" id="PF08815">
    <property type="entry name" value="Nuc_rec_co-act"/>
    <property type="match status" value="1"/>
</dbReference>
<dbReference type="Pfam" id="PF00989">
    <property type="entry name" value="PAS"/>
    <property type="match status" value="1"/>
</dbReference>
<dbReference type="Pfam" id="PF14598">
    <property type="entry name" value="PAS_11"/>
    <property type="match status" value="1"/>
</dbReference>
<dbReference type="Pfam" id="PF08832">
    <property type="entry name" value="SRC-1"/>
    <property type="match status" value="1"/>
</dbReference>
<dbReference type="PIRSF" id="PIRSF038181">
    <property type="entry name" value="Nuclear_receptor_coactivator"/>
    <property type="match status" value="1"/>
</dbReference>
<dbReference type="SMART" id="SM01151">
    <property type="entry name" value="DUF1518"/>
    <property type="match status" value="2"/>
</dbReference>
<dbReference type="SMART" id="SM00353">
    <property type="entry name" value="HLH"/>
    <property type="match status" value="1"/>
</dbReference>
<dbReference type="SMART" id="SM00091">
    <property type="entry name" value="PAS"/>
    <property type="match status" value="1"/>
</dbReference>
<dbReference type="SUPFAM" id="SSF47459">
    <property type="entry name" value="HLH, helix-loop-helix DNA-binding domain"/>
    <property type="match status" value="1"/>
</dbReference>
<dbReference type="SUPFAM" id="SSF69125">
    <property type="entry name" value="Nuclear receptor coactivator interlocking domain"/>
    <property type="match status" value="1"/>
</dbReference>
<dbReference type="SUPFAM" id="SSF55785">
    <property type="entry name" value="PYP-like sensor domain (PAS domain)"/>
    <property type="match status" value="2"/>
</dbReference>
<dbReference type="PROSITE" id="PS50888">
    <property type="entry name" value="BHLH"/>
    <property type="match status" value="1"/>
</dbReference>
<dbReference type="PROSITE" id="PS50112">
    <property type="entry name" value="PAS"/>
    <property type="match status" value="1"/>
</dbReference>
<feature type="chain" id="PRO_0000094405" description="Nuclear receptor coactivator 2">
    <location>
        <begin position="1"/>
        <end position="1516"/>
    </location>
</feature>
<feature type="domain" description="bHLH" evidence="4">
    <location>
        <begin position="23"/>
        <end position="80"/>
    </location>
</feature>
<feature type="domain" description="PAS" evidence="3">
    <location>
        <begin position="116"/>
        <end position="180"/>
    </location>
</feature>
<feature type="region of interest" description="Disordered" evidence="5">
    <location>
        <begin position="1"/>
        <end position="37"/>
    </location>
</feature>
<feature type="region of interest" description="Disordered" evidence="5">
    <location>
        <begin position="386"/>
        <end position="406"/>
    </location>
</feature>
<feature type="region of interest" description="Disordered" evidence="5">
    <location>
        <begin position="457"/>
        <end position="518"/>
    </location>
</feature>
<feature type="region of interest" description="Disordered" evidence="5">
    <location>
        <begin position="532"/>
        <end position="601"/>
    </location>
</feature>
<feature type="region of interest" description="Disordered" evidence="5">
    <location>
        <begin position="700"/>
        <end position="727"/>
    </location>
</feature>
<feature type="region of interest" description="Disordered" evidence="5">
    <location>
        <begin position="775"/>
        <end position="795"/>
    </location>
</feature>
<feature type="region of interest" description="Disordered" evidence="5">
    <location>
        <begin position="955"/>
        <end position="979"/>
    </location>
</feature>
<feature type="region of interest" description="Disordered" evidence="5">
    <location>
        <begin position="1284"/>
        <end position="1311"/>
    </location>
</feature>
<feature type="region of interest" description="Disordered" evidence="5">
    <location>
        <begin position="1324"/>
        <end position="1350"/>
    </location>
</feature>
<feature type="short sequence motif" description="LXXLL motif 1">
    <location>
        <begin position="628"/>
        <end position="632"/>
    </location>
</feature>
<feature type="short sequence motif" description="LXXLL motif 2">
    <location>
        <begin position="680"/>
        <end position="684"/>
    </location>
</feature>
<feature type="short sequence motif" description="LXXLL motif 3">
    <location>
        <begin position="735"/>
        <end position="739"/>
    </location>
</feature>
<feature type="short sequence motif" description="LLXXLXXXL motif">
    <location>
        <begin position="1064"/>
        <end position="1072"/>
    </location>
</feature>
<feature type="compositionally biased region" description="Polar residues" evidence="5">
    <location>
        <begin position="508"/>
        <end position="518"/>
    </location>
</feature>
<feature type="compositionally biased region" description="Polar residues" evidence="5">
    <location>
        <begin position="551"/>
        <end position="560"/>
    </location>
</feature>
<feature type="compositionally biased region" description="Polar residues" evidence="5">
    <location>
        <begin position="1299"/>
        <end position="1311"/>
    </location>
</feature>
<feature type="compositionally biased region" description="Pro residues" evidence="5">
    <location>
        <begin position="1324"/>
        <end position="1340"/>
    </location>
</feature>
<feature type="compositionally biased region" description="Low complexity" evidence="5">
    <location>
        <begin position="1341"/>
        <end position="1350"/>
    </location>
</feature>
<protein>
    <recommendedName>
        <fullName>Nuclear receptor coactivator 2</fullName>
        <shortName>NCoA-2</shortName>
    </recommendedName>
    <alternativeName>
        <fullName>Transcriptional intermediary factor 2</fullName>
        <shortName>xTIF2</shortName>
    </alternativeName>
</protein>
<keyword id="KW-0010">Activator</keyword>
<keyword id="KW-0090">Biological rhythms</keyword>
<keyword id="KW-0217">Developmental protein</keyword>
<keyword id="KW-0539">Nucleus</keyword>
<keyword id="KW-1185">Reference proteome</keyword>
<keyword id="KW-0677">Repeat</keyword>
<keyword id="KW-0804">Transcription</keyword>
<keyword id="KW-0805">Transcription regulation</keyword>
<gene>
    <name type="primary">ncoa2</name>
    <name type="synonym">tif2</name>
</gene>
<reference key="1">
    <citation type="journal article" date="2000" name="Mech. Dev.">
        <title>XTIF2, a Xenopus homologue of the human transcription intermediary factor, is required for a nuclear receptor pathway that also interacts with CBP to suppress Brachyury and XMyoD.</title>
        <authorList>
            <person name="de la Calle-Mustienes E."/>
            <person name="Gomez-Skarmeta J.L."/>
        </authorList>
    </citation>
    <scope>NUCLEOTIDE SEQUENCE [MRNA]</scope>
    <scope>FUNCTION</scope>
    <scope>TISSUE SPECIFICITY</scope>
</reference>